<keyword id="KW-0002">3D-structure</keyword>
<keyword id="KW-0040">ANK repeat</keyword>
<keyword id="KW-0965">Cell junction</keyword>
<keyword id="KW-0966">Cell projection</keyword>
<keyword id="KW-0175">Coiled coil</keyword>
<keyword id="KW-0963">Cytoplasm</keyword>
<keyword id="KW-0206">Cytoskeleton</keyword>
<keyword id="KW-0343">GTPase activation</keyword>
<keyword id="KW-0479">Metal-binding</keyword>
<keyword id="KW-0597">Phosphoprotein</keyword>
<keyword id="KW-1185">Reference proteome</keyword>
<keyword id="KW-0677">Repeat</keyword>
<keyword id="KW-0770">Synapse</keyword>
<keyword id="KW-0862">Zinc</keyword>
<keyword id="KW-0863">Zinc-finger</keyword>
<organism>
    <name type="scientific">Rattus norvegicus</name>
    <name type="common">Rat</name>
    <dbReference type="NCBI Taxonomy" id="10116"/>
    <lineage>
        <taxon>Eukaryota</taxon>
        <taxon>Metazoa</taxon>
        <taxon>Chordata</taxon>
        <taxon>Craniata</taxon>
        <taxon>Vertebrata</taxon>
        <taxon>Euteleostomi</taxon>
        <taxon>Mammalia</taxon>
        <taxon>Eutheria</taxon>
        <taxon>Euarchontoglires</taxon>
        <taxon>Glires</taxon>
        <taxon>Rodentia</taxon>
        <taxon>Myomorpha</taxon>
        <taxon>Muroidea</taxon>
        <taxon>Muridae</taxon>
        <taxon>Murinae</taxon>
        <taxon>Rattus</taxon>
    </lineage>
</organism>
<reference key="1">
    <citation type="journal article" date="1998" name="Proc. Natl. Acad. Sci. U.S.A.">
        <title>Beta2-adrenergic receptor regulation by GIT1, a G protein-coupled receptor kinase-associated ADP ribosylation factor GTPase-activating protein.</title>
        <authorList>
            <person name="Premont R.T."/>
            <person name="Claing A."/>
            <person name="Vitale N."/>
            <person name="Freeman J.L.R."/>
            <person name="Pitcher J.A."/>
            <person name="Patton W.A."/>
            <person name="Moss J."/>
            <person name="Vaughan M."/>
            <person name="Lefkowitz R.J."/>
        </authorList>
    </citation>
    <scope>NUCLEOTIDE SEQUENCE [MRNA]</scope>
    <scope>FUNCTION</scope>
    <scope>INTERACTION WITH GRK2; GRK3; GRK5 AND GRK6</scope>
    <scope>TISSUE SPECIFICITY</scope>
    <scope>CHARACTERIZATION</scope>
</reference>
<reference key="2">
    <citation type="journal article" date="2000" name="Mol. Cell. Biol.">
        <title>Coupling of PAK-interacting exchange factor PIX to GIT1 promotes focal complex disassembly.</title>
        <authorList>
            <person name="Zhao Z.-S."/>
            <person name="Manser E."/>
            <person name="Loo T.-H."/>
            <person name="Lim L."/>
        </authorList>
    </citation>
    <scope>FUNCTION</scope>
    <scope>INTERACTION WITH ARHGEF7; PXN AND PTK2</scope>
    <scope>SUBCELLULAR LOCATION</scope>
    <scope>TISSUE SPECIFICITY</scope>
    <scope>PHOSPHORYLATION</scope>
</reference>
<reference key="3">
    <citation type="journal article" date="2002" name="J. Biochem.">
        <title>Hic-5 interacts with GIT1 with a different binding mode from paxillin.</title>
        <authorList>
            <person name="Nishiya N."/>
            <person name="Shirai T."/>
            <person name="Suzuki W."/>
            <person name="Nose K."/>
        </authorList>
    </citation>
    <scope>INTERACTION WITH PXN AND TGFB1I1</scope>
</reference>
<reference key="4">
    <citation type="journal article" date="2003" name="J. Biol. Chem.">
        <title>The GIT family of proteins forms multimers and associates with the presynaptic cytomatrix protein Piccolo.</title>
        <authorList>
            <person name="Kim S."/>
            <person name="Ko J."/>
            <person name="Shin H."/>
            <person name="Lee J.R."/>
            <person name="Lim C."/>
            <person name="Han J.H."/>
            <person name="Altrock W.D."/>
            <person name="Garner C.C."/>
            <person name="Gundelfinger E.D."/>
            <person name="Premont R.T."/>
            <person name="Kaang B.K."/>
            <person name="Kim E."/>
        </authorList>
    </citation>
    <scope>FUNCTION</scope>
    <scope>INTERACTION WITH ARHGEF7; PCLO; GIT2; GRIP1; PPFIA1; PTK2 AND PXN</scope>
    <scope>HOMOOLIGOMERIZATION</scope>
    <scope>SUBCELLULAR LOCATION</scope>
    <scope>TISSUE SPECIFICITY</scope>
    <scope>DOMAIN</scope>
    <scope>MUTAGENESIS OF PHE-285; LEU-288; ARG-298; ARG-299 AND 432-LEU--PRO-483</scope>
</reference>
<reference key="5">
    <citation type="journal article" date="2003" name="J. Cell Biol.">
        <title>Synapse formation is regulated by the signaling adaptor GIT1.</title>
        <authorList>
            <person name="Zhang H."/>
            <person name="Webb D.J."/>
            <person name="Asmussen H."/>
            <person name="Horwitz A.F."/>
        </authorList>
    </citation>
    <scope>FUNCTION</scope>
    <scope>SUBCELLULAR LOCATION</scope>
    <scope>TISSUE SPECIFICITY</scope>
</reference>
<reference key="6">
    <citation type="journal article" date="2003" name="J. Neurosci.">
        <title>Interaction between liprin-alpha and GIT1 is required for AMPA receptor targeting.</title>
        <authorList>
            <person name="Ko J."/>
            <person name="Kim S."/>
            <person name="Valtschanoff J.G."/>
            <person name="Shin H."/>
            <person name="Lee J.R."/>
            <person name="Sheng M."/>
            <person name="Premont R.T."/>
            <person name="Weinberg R.J."/>
            <person name="Kim E."/>
        </authorList>
    </citation>
    <scope>FUNCTION</scope>
    <scope>INTERACTION WITH ARHGEF7; GRIA2/3; GRIP1; PPFIA1; PPFIA2; PPFIA4; PTK2; PTK2B AND PXN</scope>
    <scope>SUBCELLULAR LOCATION</scope>
    <scope>TISSUE SPECIFICITY</scope>
</reference>
<reference key="7">
    <citation type="journal article" date="2005" name="J. Biol. Chem.">
        <title>GIT1 is a scaffold for ERK1/2 activation in focal adhesions.</title>
        <authorList>
            <person name="Yin G."/>
            <person name="Zheng Q."/>
            <person name="Yan C."/>
            <person name="Berk B.C."/>
        </authorList>
    </citation>
    <scope>FUNCTION</scope>
    <scope>INTERACTION WITH MAPK1 AND MAPK3</scope>
</reference>
<reference key="8">
    <citation type="journal article" date="2005" name="J. Neurosci.">
        <title>A GIT1/PIX/Rac/PAK signaling module regulates spine morphogenesis and synapse formation through MLC.</title>
        <authorList>
            <person name="Zhang H."/>
            <person name="Webb D.J."/>
            <person name="Asmussen H."/>
            <person name="Niu S."/>
            <person name="Horwitz A.F."/>
        </authorList>
    </citation>
    <scope>FUNCTION</scope>
    <scope>TISSUE SPECIFICITY</scope>
</reference>
<reference key="9">
    <citation type="journal article" date="2007" name="Nat. Neurosci.">
        <title>Grb4 and GIT1 transduce ephrinB reverse signals modulating spine morphogenesis and synapse formation.</title>
        <authorList>
            <person name="Segura I."/>
            <person name="Essmann C.L."/>
            <person name="Weinges S."/>
            <person name="Acker-Palmer A."/>
        </authorList>
    </citation>
    <scope>FUNCTION</scope>
    <scope>INTERACTION WITH ARHGEF7; EFNB1 AND NCK2</scope>
    <scope>SUBCELLULAR LOCATION</scope>
    <scope>TISSUE SPECIFICITY</scope>
    <scope>PHOSPHORYLATION AT TYR-392</scope>
    <scope>MUTAGENESIS OF TYR-392</scope>
</reference>
<reference key="10">
    <citation type="journal article" date="2012" name="Nat. Commun.">
        <title>Quantitative maps of protein phosphorylation sites across 14 different rat organs and tissues.</title>
        <authorList>
            <person name="Lundby A."/>
            <person name="Secher A."/>
            <person name="Lage K."/>
            <person name="Nordsborg N.B."/>
            <person name="Dmytriyev A."/>
            <person name="Lundby C."/>
            <person name="Olsen J.V."/>
        </authorList>
    </citation>
    <scope>PHOSPHORYLATION [LARGE SCALE ANALYSIS] AT SER-371; SER-384; SER-397; THR-401; SER-419; SER-570; SER-580; SER-601 AND SER-639</scope>
    <scope>IDENTIFICATION BY MASS SPECTROMETRY [LARGE SCALE ANALYSIS]</scope>
</reference>
<reference key="11">
    <citation type="journal article" date="2013" name="Proc. Natl. Acad. Sci. U.S.A.">
        <title>GluN3A expression restricts spine maturation via inhibition of GIT1/Rac1 signaling.</title>
        <authorList>
            <person name="Fiuza M."/>
            <person name="Gonzalez-Gonzalez I."/>
            <person name="Perez-Otano I."/>
        </authorList>
    </citation>
    <scope>FUNCTION</scope>
    <scope>INTERACTION WITH ARHGEF7 AND GRIN3A</scope>
    <scope>TISSUE SPECIFICITY</scope>
    <scope>DEVELOPMENTAL STAGE</scope>
</reference>
<reference key="12">
    <citation type="journal article" date="2014" name="Cell Rep.">
        <title>GIT1 and betaPIX are essential for GABA(A) receptor synaptic stability and inhibitory neurotransmission.</title>
        <authorList>
            <person name="Smith K.R."/>
            <person name="Davenport E.C."/>
            <person name="Wei J."/>
            <person name="Li X."/>
            <person name="Pathania M."/>
            <person name="Vaccaro V."/>
            <person name="Yan Z."/>
            <person name="Kittler J.T."/>
        </authorList>
    </citation>
    <scope>FUNCTION</scope>
    <scope>INTERACTION WITH GABRB3 AND GABRG2</scope>
    <scope>SUBCELLULAR LOCATION</scope>
    <scope>TISSUE SPECIFICITY</scope>
</reference>
<reference key="13">
    <citation type="journal article" date="2014" name="J. Neurosci.">
        <title>GluN3A promotes dendritic spine pruning and destabilization during postnatal development.</title>
        <authorList>
            <person name="Kehoe L.A."/>
            <person name="Bellone C."/>
            <person name="De Roo M."/>
            <person name="Zandueta A."/>
            <person name="Dey P.N."/>
            <person name="Perez-Otano I."/>
            <person name="Muller D."/>
        </authorList>
    </citation>
    <scope>FUNCTION</scope>
</reference>
<reference key="14">
    <citation type="journal article" date="2009" name="J. Mol. Biol.">
        <title>Structures of dimeric GIT1 and trimeric beta-PIX and implications for GIT-PIX complex assembly.</title>
        <authorList>
            <person name="Schlenker O."/>
            <person name="Rittinger K."/>
        </authorList>
    </citation>
    <scope>X-RAY CRYSTALLOGRAPHY (1.40 ANGSTROMS) OF 426-483</scope>
    <scope>DIMERIZATION</scope>
    <scope>INTERACTION WITH ARHGEF7</scope>
    <scope>DOMAIN</scope>
</reference>
<feature type="chain" id="PRO_0000074202" description="ARF GTPase-activating protein GIT1">
    <location>
        <begin position="1"/>
        <end position="770"/>
    </location>
</feature>
<feature type="domain" description="Arf-GAP" evidence="4">
    <location>
        <begin position="1"/>
        <end position="124"/>
    </location>
</feature>
<feature type="repeat" description="ANK 1">
    <location>
        <begin position="132"/>
        <end position="161"/>
    </location>
</feature>
<feature type="repeat" description="ANK 2">
    <location>
        <begin position="166"/>
        <end position="195"/>
    </location>
</feature>
<feature type="repeat" description="ANK 3">
    <location>
        <begin position="199"/>
        <end position="228"/>
    </location>
</feature>
<feature type="zinc finger region" description="C4-type" evidence="4">
    <location>
        <begin position="11"/>
        <end position="34"/>
    </location>
</feature>
<feature type="region of interest" description="Interaction with gamma-tubulin and localization to the centrosome" evidence="2">
    <location>
        <begin position="1"/>
        <end position="124"/>
    </location>
</feature>
<feature type="region of interest" description="Interaction with PCLO" evidence="8">
    <location>
        <begin position="245"/>
        <end position="374"/>
    </location>
</feature>
<feature type="region of interest" description="Interaction with PTK2/FAK1" evidence="6">
    <location>
        <begin position="253"/>
        <end position="424"/>
    </location>
</feature>
<feature type="region of interest" description="Interaction with ARHGEF7" evidence="6">
    <location>
        <begin position="254"/>
        <end position="376"/>
    </location>
</feature>
<feature type="region of interest" description="Disordered" evidence="5">
    <location>
        <begin position="363"/>
        <end position="425"/>
    </location>
</feature>
<feature type="region of interest" description="Interaction with NCK2 and GRIN3A" evidence="13 15">
    <location>
        <begin position="375"/>
        <end position="596"/>
    </location>
</feature>
<feature type="region of interest" description="Required for localization at synapses" evidence="2">
    <location>
        <begin position="375"/>
        <end position="596"/>
    </location>
</feature>
<feature type="region of interest" description="Interaction with MAPK1" evidence="1">
    <location>
        <begin position="420"/>
        <end position="475"/>
    </location>
</feature>
<feature type="region of interest" description="Interaction with IKBKG" evidence="2">
    <location>
        <begin position="429"/>
        <end position="629"/>
    </location>
</feature>
<feature type="region of interest" description="Disordered" evidence="5">
    <location>
        <begin position="574"/>
        <end position="615"/>
    </location>
</feature>
<feature type="region of interest" description="Interaction with PXN and TGFB1I1" evidence="6 7">
    <location>
        <begin position="646"/>
        <end position="770"/>
    </location>
</feature>
<feature type="coiled-coil region" evidence="3 14">
    <location>
        <begin position="449"/>
        <end position="483"/>
    </location>
</feature>
<feature type="compositionally biased region" description="Polar residues" evidence="5">
    <location>
        <begin position="366"/>
        <end position="383"/>
    </location>
</feature>
<feature type="compositionally biased region" description="Acidic residues" evidence="5">
    <location>
        <begin position="394"/>
        <end position="403"/>
    </location>
</feature>
<feature type="compositionally biased region" description="Low complexity" evidence="5">
    <location>
        <begin position="574"/>
        <end position="586"/>
    </location>
</feature>
<feature type="modified residue" description="Phosphotyrosine" evidence="1">
    <location>
        <position position="224"/>
    </location>
</feature>
<feature type="modified residue" description="Phosphoserine" evidence="1">
    <location>
        <position position="368"/>
    </location>
</feature>
<feature type="modified residue" description="Phosphoserine" evidence="22">
    <location>
        <position position="371"/>
    </location>
</feature>
<feature type="modified residue" description="Phosphothreonine" evidence="2">
    <location>
        <position position="373"/>
    </location>
</feature>
<feature type="modified residue" description="Phosphoserine" evidence="2">
    <location>
        <position position="379"/>
    </location>
</feature>
<feature type="modified residue" description="Phosphoserine" evidence="22">
    <location>
        <position position="384"/>
    </location>
</feature>
<feature type="modified residue" description="Phosphotyrosine" evidence="2">
    <location>
        <position position="392"/>
    </location>
</feature>
<feature type="modified residue" description="Phosphoserine" evidence="2">
    <location>
        <position position="394"/>
    </location>
</feature>
<feature type="modified residue" description="Phosphoserine" evidence="22">
    <location>
        <position position="397"/>
    </location>
</feature>
<feature type="modified residue" description="Phosphothreonine" evidence="22">
    <location>
        <position position="401"/>
    </location>
</feature>
<feature type="modified residue" description="Phosphoserine" evidence="22">
    <location>
        <position position="419"/>
    </location>
</feature>
<feature type="modified residue" description="Phosphoserine" evidence="1">
    <location>
        <position position="422"/>
    </location>
</feature>
<feature type="modified residue" description="Phosphoserine" evidence="1">
    <location>
        <position position="426"/>
    </location>
</feature>
<feature type="modified residue" description="Phosphoserine" evidence="2">
    <location>
        <position position="507"/>
    </location>
</feature>
<feature type="modified residue" description="Phosphoserine" evidence="1">
    <location>
        <position position="545"/>
    </location>
</feature>
<feature type="modified residue" description="Phosphothreonine" evidence="1">
    <location>
        <position position="546"/>
    </location>
</feature>
<feature type="modified residue" description="Phosphotyrosine" evidence="2">
    <location>
        <position position="554"/>
    </location>
</feature>
<feature type="modified residue" description="Phosphotyrosine" evidence="2">
    <location>
        <position position="563"/>
    </location>
</feature>
<feature type="modified residue" description="Phosphoserine" evidence="22">
    <location>
        <position position="570"/>
    </location>
</feature>
<feature type="modified residue" description="Phosphoserine" evidence="22">
    <location>
        <position position="580"/>
    </location>
</feature>
<feature type="modified residue" description="Phosphoserine" evidence="22">
    <location>
        <position position="601"/>
    </location>
</feature>
<feature type="modified residue" description="Phosphoserine" evidence="2">
    <location>
        <position position="605"/>
    </location>
</feature>
<feature type="modified residue" description="Phosphothreonine" evidence="2">
    <location>
        <position position="610"/>
    </location>
</feature>
<feature type="modified residue" description="Phosphoserine" evidence="22">
    <location>
        <position position="639"/>
    </location>
</feature>
<feature type="mutagenesis site" description="Loss of interaction with FAK1, decreased interaction with PCLO, no effect on interaction with ARHGEF7." evidence="8">
    <original>F</original>
    <variation>A</variation>
    <location>
        <position position="285"/>
    </location>
</feature>
<feature type="mutagenesis site" description="Loss of interaction with PCLO and FAK1, no effect on interaction with ARHGEF7." evidence="8">
    <original>L</original>
    <variation>A</variation>
    <location>
        <position position="288"/>
    </location>
</feature>
<feature type="mutagenesis site" description="Loss of interaction with FAK1, decreased interaction with PCLO, no effect on interaction with ARHGEF7." evidence="8">
    <original>R</original>
    <variation>A</variation>
    <location>
        <position position="298"/>
    </location>
</feature>
<feature type="mutagenesis site" description="Loss of interaction with FAK1, decreased interaction with PCLO, no effect on interaction with ARHGEF7." evidence="8">
    <original>R</original>
    <variation>A</variation>
    <location>
        <position position="299"/>
    </location>
</feature>
<feature type="mutagenesis site" description="Loss of interaction with NCK2." evidence="13">
    <original>Y</original>
    <variation>F</variation>
    <location>
        <position position="392"/>
    </location>
</feature>
<feature type="mutagenesis site" description="Decreased homooligomerization and loss of formation of a ternary complex between GIT1, ARHGEF7 and PCLO. Does not affect ARHGEF7- and PCLO-binding to GIT1 monomer." evidence="8">
    <location>
        <begin position="432"/>
        <end position="483"/>
    </location>
</feature>
<feature type="helix" evidence="24">
    <location>
        <begin position="432"/>
        <end position="481"/>
    </location>
</feature>
<feature type="strand" evidence="23">
    <location>
        <begin position="645"/>
        <end position="647"/>
    </location>
</feature>
<feature type="helix" evidence="25">
    <location>
        <begin position="651"/>
        <end position="673"/>
    </location>
</feature>
<feature type="helix" evidence="25">
    <location>
        <begin position="677"/>
        <end position="679"/>
    </location>
</feature>
<feature type="helix" evidence="25">
    <location>
        <begin position="680"/>
        <end position="695"/>
    </location>
</feature>
<feature type="strand" evidence="23">
    <location>
        <begin position="700"/>
        <end position="702"/>
    </location>
</feature>
<feature type="helix" evidence="25">
    <location>
        <begin position="705"/>
        <end position="725"/>
    </location>
</feature>
<feature type="helix" evidence="25">
    <location>
        <begin position="726"/>
        <end position="728"/>
    </location>
</feature>
<feature type="helix" evidence="25">
    <location>
        <begin position="739"/>
        <end position="766"/>
    </location>
</feature>
<comment type="function">
    <text evidence="1 2 6 8 9 10 11 12 13 15 16 17 18">GTPase-activating protein for ADP ribosylation factor family members, including ARF1 (PubMed:9826657). Multidomain scaffold protein that interacts with numerous proteins and therefore participates in many cellular functions, including receptor internalization, focal adhesion remodeling, and signaling by both G protein-coupled receptors and tyrosine kinase receptors (PubMed:9826657). Through PAK1 activation, positively regulates microtubule nucleation during interphase. Plays a role in the regulation of cytokinesis; for this function, may act in a pathway also involving ENTR1 and PTPN13 (By similarity). May promote cell motility both by regulating focal complex dynamics and by the activation of RAC1 (PubMed:10938112). May act as scaffold for MAPK1/3 signal transduction, recruiting MAPK1/3 to focal adhesions after EGF stimulation via a Src-dependent pathway, hence stimulating cell migration (PubMed:15923189). Plays a role in brain development and function. Involved in the regulation of spine density and synaptic plasticity that is required for processes involved in learning (By similarity). Plays an important role in dendritic spine morphogenesis and synapse formation (PubMed:12695502, PubMed:15800193, PubMed:17310244, PubMed:24297929, PubMed:25009255). In hippocampal neurons, recruits guanine nucleotide exchange factors (GEFs), such as ARHGEF7/beta-PIX, to the synaptic membrane. These in turn locally activate RAC1, which is an essential step for spine morphogenesis and synapse formation (PubMed:12473661). May contribute to the organization of presynaptic active zones through oligomerization and formation of a Piccolo/PCLO-based protein network, which includes ARHGEF7/beta-PIX and FAK1 (PubMed:12473661). In neurons, through its interaction with liprin-alpha family members, may be required for AMPA receptor (GRIA2/3) proper targeting to the cell membrane (PubMed:12629171). In complex with GABA(A) receptors and ARHGEF7, plays a crucial role in regulating GABA(A) receptor synaptic stability, maintaining GPHN/gephyrin scaffolds and hence GABAergic inhibitory synaptic transmission, by locally coordinating RAC1 and PAK1 downstream effector activity, leading to F-actin stabilization (PubMed:25284783). May also be important for RAC1 downstream signaling pathway through PAK3 and regulation of neuronal inhibitory transmission at presynaptic input (By similarity). Required for successful bone regeneration during fracture healing. The function in intramembranous ossification may, at least partly, exerted by macrophages in which GIT1 is a key negative regulator of redox homeostasis, IL1B production, and glycolysis, acting through the ERK1/2/NRF2/NFE2L2 axis (By similarity). May also play a role in angiogenesis during fracture healing (By similarity). In this process, may regulate activation of the canonical NF-kappa-B signal in bone mesenchymal stem cells by enhancing the interaction between NEMO and 'Lys-63'-ubiquitinated RIPK1/RIP1, eventually leading to enhanced production of VEGFA and others angiogenic factors (By similarity). Essential for VEGF signaling through the activation of phospholipase C-gamma and ERK1/2, hence may control endothelial cell proliferation and angiogenesis (By similarity).</text>
</comment>
<comment type="subunit">
    <text evidence="1 2 6 7 8 9 12 13 14 15 17 18 21">Forms homodimers and possibly oligomers (PubMed:12473661, PubMed:19136011). May form heterooligomers with GIT2 (Probable). Interacts with G protein-coupled receptor kinases, including GRK2, GRK3, GRK5 and GRK6 (PubMed:9826657). Interacts with PPFIA1, PPFIA2 and PPFIA4 (PubMed:12473661, PubMed:12629171). Interacts with GRIP1 and forms a ternary complex with PPFIA1 and GRIP1 (PubMed:12473661, PubMed:12629171). Directly interacts with ARHGEF7/beta-PIX, forming in vitro a heptameric complex made of a GIT1 dimer and an ARHGEF7 trimer (PubMed:10938112, PubMed:12473661, PubMed:12629171, PubMed:17310244, PubMed:19136011). Directly interacts with PXN/paxillin; this interaction is enhanced in the presence of ARHGEF7 (PubMed:10938112, PubMed:12153727, PubMed:12473661, PubMed:12629171). Directly interacts (via C-terminus) with TGFB1I1/Hic-5 (via LD motif 3) (PubMed:12153727). Directly interacts with PTK2/FAK1 (PubMed:10938112, PubMed:12473661, PubMed:12629171). May interact with PTK2B/PYK2; this interaction may be indirect (PubMed:12629171). Interacts with AMPA receptors GRIA2/3 (PubMed:12629171). Directly interacts with protein Piccolo/PCLO (PubMed:12473661). Forms a complex with Ephrin-B1/EFNB1 and NCK2/GRB4 (via SH2); this interaction is important for spine morphogenesis and synapse formation. Interaction with NCK2 is transient and depends upon GIT1 phosphorylation at Tyr-392 (PubMed:17310244). Interacts with GRIN3A/GluN3A (via C-terminus); this interaction competes with GIT1 interaction with ARHGEF7 and limits synaptic localization of GIT1 (PubMed:24297929). Interacts with IKBKG/NEMO in resting bone mesenchymal stem cells, as well as in TNF-stimulated cells; this interaction may increase IKBKG affinity for 'Lys-63'-linked polyubiquitin chains (By similarity). Interacts with GABA(A) receptors, including GABRB3 and GABRG2 (PubMed:25284783). Interacts with SCRIB (By similarity). Interacts (via N- and C-terminus) with ENTR1/SDCCAG3 (via N-terminus); this interaction is direct. May form a tripartite complex with ENTR1 and PTPN13 (By similarity). Interacts with YWHAZ (By similarity). Interacts with PAK1 and PAK3 (By similarity). Directly interacts (via N-terminus) with gamma-tubulin (By similarity). Interacts with MAPK1 and MAPK3; this interaction is required for MAPK1/3 recruitment to focal adhesions (PubMed:15923189).</text>
</comment>
<comment type="interaction">
    <interactant intactId="EBI-3842379">
        <id>Q9Z272</id>
    </interactant>
    <interactant intactId="EBI-642580">
        <id>Q9ES28</id>
        <label>Arhgef7</label>
    </interactant>
    <organismsDiffer>true</organismsDiffer>
    <experiments>2</experiments>
</comment>
<comment type="subcellular location">
    <subcellularLocation>
        <location evidence="2">Cytoplasm</location>
    </subcellularLocation>
    <subcellularLocation>
        <location evidence="13 17">Synapse</location>
    </subcellularLocation>
    <subcellularLocation>
        <location evidence="8 9 10">Presynapse</location>
    </subcellularLocation>
    <subcellularLocation>
        <location evidence="9 10">Postsynapse</location>
    </subcellularLocation>
    <subcellularLocation>
        <location evidence="9">Postsynaptic density</location>
    </subcellularLocation>
    <subcellularLocation>
        <location evidence="20">Cell junction</location>
        <location evidence="20">Focal adhesion</location>
    </subcellularLocation>
    <subcellularLocation>
        <location evidence="2">Cell projection</location>
        <location evidence="2">Lamellipodium</location>
    </subcellularLocation>
    <subcellularLocation>
        <location evidence="2">Cytoplasm</location>
        <location evidence="2">Cytoskeleton</location>
        <location evidence="2">Microtubule organizing center</location>
        <location evidence="2">Centrosome</location>
    </subcellularLocation>
    <subcellularLocation>
        <location evidence="2">Cytoplasm</location>
        <location evidence="2">Cytoskeleton</location>
        <location evidence="2">Spindle pole</location>
    </subcellularLocation>
    <text evidence="2 8 10 13 15 17">Cycles between at least 3 distinct intracellular compartments, including focal adhesions, cytosolic complexes, containing at least PXN/paxillin, ARHGEF7 and PAK1, and membrane protrusions. During cell migration, moves from the disassembling adhesions into the cytosol and towards the leading edge. In adherent cells, localizes to adhesions. Recruitment to adhesions may be mediated by RAC1 and active tyrosine-phosphorylated PXN (By similarity). May be present in both excitatory, as well as inhibitory synapses (PubMed:12695502, PubMed:25284783). In hippocampal neurons, recruitment of GIT1 to synapses is regulated by ephrinB activation and ephrinB downstream effector GRB4/NCK2 (PubMed:17310244). In hippocampal neurons, partially colocalizes with PCLO (PubMed:12473661). Interaction with GRIN3A limits GIT1 synaptic localization (PubMed:24297929). Localization to the centrosome does not depend upon the presence of gamma-tubulin (By similarity).</text>
</comment>
<comment type="tissue specificity">
    <text evidence="6 8 9 10 11 13 15 17 18">Widely expressed (PubMed:9826657). Expressed at high levels in testis (at protein level) (PubMed:10938112). Expressed in the brain, including in CA1 hippocampal neurons, in the amygdala, and thalamic nuclei (at protein level) (PubMed:10938112, PubMed:12473661, PubMed:12629171, PubMed:12695502, PubMed:15800193, PubMed:17310244, PubMed:24297929, PubMed:25284783).</text>
</comment>
<comment type="developmental stage">
    <text evidence="15">In the brain cortex and in the hippocampus, continuously expressed from P0 to adult age (at protein level).</text>
</comment>
<comment type="domain">
    <text evidence="8 14">The coiled coil region mediates dimerization.</text>
</comment>
<comment type="PTM">
    <text evidence="6 13">Phosphorylated on tyrosine residues by PTK2/FAK1 and SRC in growing fibroblasts (PubMed:10938112). Phosphorylation at Tyr-392 is induced by activation of Ephrin-B1/EFNB1 and catalyzed by SRC family kinases. It is required for the interaction with NCK2 and for GIT1 recruitment to synapses in hippocampal neurons (PubMed:17310244).</text>
</comment>
<name>GIT1_RAT</name>
<protein>
    <recommendedName>
        <fullName>ARF GTPase-activating protein GIT1</fullName>
        <shortName>ARF GAP GIT1</shortName>
    </recommendedName>
    <alternativeName>
        <fullName>Cool-associated and tyrosine-phosphorylated protein 1</fullName>
        <shortName>CAT-1</shortName>
        <shortName>CAT1</shortName>
    </alternativeName>
    <alternativeName>
        <fullName>G protein-coupled receptor kinase-interactor 1</fullName>
    </alternativeName>
    <alternativeName>
        <fullName>GRK-interacting protein 1</fullName>
    </alternativeName>
    <alternativeName>
        <fullName evidence="19">GRK-interactor 1</fullName>
    </alternativeName>
</protein>
<proteinExistence type="evidence at protein level"/>
<dbReference type="EMBL" id="AF085693">
    <property type="protein sequence ID" value="AAC83348.1"/>
    <property type="molecule type" value="mRNA"/>
</dbReference>
<dbReference type="RefSeq" id="NP_114002.1">
    <property type="nucleotide sequence ID" value="NM_031814.2"/>
</dbReference>
<dbReference type="PDB" id="2JX0">
    <property type="method" value="NMR"/>
    <property type="chains" value="A=640-770"/>
</dbReference>
<dbReference type="PDB" id="2W6A">
    <property type="method" value="X-ray"/>
    <property type="resolution" value="1.40 A"/>
    <property type="chains" value="A/B=426-483"/>
</dbReference>
<dbReference type="PDB" id="6IUH">
    <property type="method" value="X-ray"/>
    <property type="resolution" value="1.80 A"/>
    <property type="chains" value="A/B=645-770"/>
</dbReference>
<dbReference type="PDB" id="6IUI">
    <property type="method" value="X-ray"/>
    <property type="resolution" value="2.60 A"/>
    <property type="chains" value="A/B=645-770"/>
</dbReference>
<dbReference type="PDBsum" id="2JX0"/>
<dbReference type="PDBsum" id="2W6A"/>
<dbReference type="PDBsum" id="6IUH"/>
<dbReference type="PDBsum" id="6IUI"/>
<dbReference type="SMR" id="Q9Z272"/>
<dbReference type="BioGRID" id="249809">
    <property type="interactions" value="9"/>
</dbReference>
<dbReference type="CORUM" id="Q9Z272"/>
<dbReference type="FunCoup" id="Q9Z272">
    <property type="interactions" value="2773"/>
</dbReference>
<dbReference type="IntAct" id="Q9Z272">
    <property type="interactions" value="5"/>
</dbReference>
<dbReference type="MINT" id="Q9Z272"/>
<dbReference type="STRING" id="10116.ENSRNOP00000073267"/>
<dbReference type="GlyGen" id="Q9Z272">
    <property type="glycosylation" value="1 site, 1 O-linked glycan (1 site)"/>
</dbReference>
<dbReference type="iPTMnet" id="Q9Z272"/>
<dbReference type="PhosphoSitePlus" id="Q9Z272"/>
<dbReference type="SwissPalm" id="Q9Z272"/>
<dbReference type="jPOST" id="Q9Z272"/>
<dbReference type="PaxDb" id="10116-ENSRNOP00000052961"/>
<dbReference type="ABCD" id="Q9Z272">
    <property type="antibodies" value="1 sequenced antibody"/>
</dbReference>
<dbReference type="GeneID" id="83709"/>
<dbReference type="KEGG" id="rno:83709"/>
<dbReference type="AGR" id="RGD:69331"/>
<dbReference type="CTD" id="28964"/>
<dbReference type="RGD" id="69331">
    <property type="gene designation" value="Git1"/>
</dbReference>
<dbReference type="eggNOG" id="KOG0818">
    <property type="taxonomic scope" value="Eukaryota"/>
</dbReference>
<dbReference type="InParanoid" id="Q9Z272"/>
<dbReference type="OrthoDB" id="5588096at2759"/>
<dbReference type="PhylomeDB" id="Q9Z272"/>
<dbReference type="Reactome" id="R-RNO-3928664">
    <property type="pathway name" value="Ephrin signaling"/>
</dbReference>
<dbReference type="Reactome" id="R-RNO-9013149">
    <property type="pathway name" value="RAC1 GTPase cycle"/>
</dbReference>
<dbReference type="Reactome" id="R-RNO-9013404">
    <property type="pathway name" value="RAC2 GTPase cycle"/>
</dbReference>
<dbReference type="Reactome" id="R-RNO-9013406">
    <property type="pathway name" value="RHOQ GTPase cycle"/>
</dbReference>
<dbReference type="Reactome" id="R-RNO-9013420">
    <property type="pathway name" value="RHOU GTPase cycle"/>
</dbReference>
<dbReference type="Reactome" id="R-RNO-9013424">
    <property type="pathway name" value="RHOV GTPase cycle"/>
</dbReference>
<dbReference type="EvolutionaryTrace" id="Q9Z272"/>
<dbReference type="PRO" id="PR:Q9Z272"/>
<dbReference type="Proteomes" id="UP000002494">
    <property type="component" value="Unplaced"/>
</dbReference>
<dbReference type="GO" id="GO:0044305">
    <property type="term" value="C:calyx of Held"/>
    <property type="evidence" value="ECO:0000266"/>
    <property type="project" value="RGD"/>
</dbReference>
<dbReference type="GO" id="GO:0005813">
    <property type="term" value="C:centrosome"/>
    <property type="evidence" value="ECO:0000250"/>
    <property type="project" value="UniProtKB"/>
</dbReference>
<dbReference type="GO" id="GO:0005829">
    <property type="term" value="C:cytosol"/>
    <property type="evidence" value="ECO:0000318"/>
    <property type="project" value="GO_Central"/>
</dbReference>
<dbReference type="GO" id="GO:0030425">
    <property type="term" value="C:dendrite"/>
    <property type="evidence" value="ECO:0000314"/>
    <property type="project" value="RGD"/>
</dbReference>
<dbReference type="GO" id="GO:0005768">
    <property type="term" value="C:endosome"/>
    <property type="evidence" value="ECO:0000314"/>
    <property type="project" value="RGD"/>
</dbReference>
<dbReference type="GO" id="GO:0060076">
    <property type="term" value="C:excitatory synapse"/>
    <property type="evidence" value="ECO:0000314"/>
    <property type="project" value="RGD"/>
</dbReference>
<dbReference type="GO" id="GO:0005925">
    <property type="term" value="C:focal adhesion"/>
    <property type="evidence" value="ECO:0000304"/>
    <property type="project" value="RGD"/>
</dbReference>
<dbReference type="GO" id="GO:0098982">
    <property type="term" value="C:GABA-ergic synapse"/>
    <property type="evidence" value="ECO:0000314"/>
    <property type="project" value="SynGO"/>
</dbReference>
<dbReference type="GO" id="GO:0098978">
    <property type="term" value="C:glutamatergic synapse"/>
    <property type="evidence" value="ECO:0000314"/>
    <property type="project" value="SynGO"/>
</dbReference>
<dbReference type="GO" id="GO:0030426">
    <property type="term" value="C:growth cone"/>
    <property type="evidence" value="ECO:0000314"/>
    <property type="project" value="RGD"/>
</dbReference>
<dbReference type="GO" id="GO:0060077">
    <property type="term" value="C:inhibitory synapse"/>
    <property type="evidence" value="ECO:0000314"/>
    <property type="project" value="RGD"/>
</dbReference>
<dbReference type="GO" id="GO:0030027">
    <property type="term" value="C:lamellipodium"/>
    <property type="evidence" value="ECO:0007669"/>
    <property type="project" value="UniProtKB-SubCell"/>
</dbReference>
<dbReference type="GO" id="GO:0005739">
    <property type="term" value="C:mitochondrion"/>
    <property type="evidence" value="ECO:0007669"/>
    <property type="project" value="Ensembl"/>
</dbReference>
<dbReference type="GO" id="GO:0097431">
    <property type="term" value="C:mitotic spindle pole"/>
    <property type="evidence" value="ECO:0000250"/>
    <property type="project" value="UniProtKB"/>
</dbReference>
<dbReference type="GO" id="GO:0043005">
    <property type="term" value="C:neuron projection"/>
    <property type="evidence" value="ECO:0000318"/>
    <property type="project" value="GO_Central"/>
</dbReference>
<dbReference type="GO" id="GO:0098794">
    <property type="term" value="C:postsynapse"/>
    <property type="evidence" value="ECO:0000314"/>
    <property type="project" value="SynGO"/>
</dbReference>
<dbReference type="GO" id="GO:0014069">
    <property type="term" value="C:postsynaptic density"/>
    <property type="evidence" value="ECO:0007669"/>
    <property type="project" value="UniProtKB-SubCell"/>
</dbReference>
<dbReference type="GO" id="GO:0098793">
    <property type="term" value="C:presynapse"/>
    <property type="evidence" value="ECO:0000266"/>
    <property type="project" value="RGD"/>
</dbReference>
<dbReference type="GO" id="GO:0045202">
    <property type="term" value="C:synapse"/>
    <property type="evidence" value="ECO:0000318"/>
    <property type="project" value="GO_Central"/>
</dbReference>
<dbReference type="GO" id="GO:0043015">
    <property type="term" value="F:gamma-tubulin binding"/>
    <property type="evidence" value="ECO:0000250"/>
    <property type="project" value="UniProtKB"/>
</dbReference>
<dbReference type="GO" id="GO:0005096">
    <property type="term" value="F:GTPase activator activity"/>
    <property type="evidence" value="ECO:0000314"/>
    <property type="project" value="RGD"/>
</dbReference>
<dbReference type="GO" id="GO:0042802">
    <property type="term" value="F:identical protein binding"/>
    <property type="evidence" value="ECO:0000353"/>
    <property type="project" value="RGD"/>
</dbReference>
<dbReference type="GO" id="GO:0019903">
    <property type="term" value="F:protein phosphatase binding"/>
    <property type="evidence" value="ECO:0000353"/>
    <property type="project" value="RGD"/>
</dbReference>
<dbReference type="GO" id="GO:1990782">
    <property type="term" value="F:protein tyrosine kinase binding"/>
    <property type="evidence" value="ECO:0000353"/>
    <property type="project" value="RGD"/>
</dbReference>
<dbReference type="GO" id="GO:0044877">
    <property type="term" value="F:protein-containing complex binding"/>
    <property type="evidence" value="ECO:0000266"/>
    <property type="project" value="RGD"/>
</dbReference>
<dbReference type="GO" id="GO:0097110">
    <property type="term" value="F:scaffold protein binding"/>
    <property type="evidence" value="ECO:0000353"/>
    <property type="project" value="RGD"/>
</dbReference>
<dbReference type="GO" id="GO:0031267">
    <property type="term" value="F:small GTPase binding"/>
    <property type="evidence" value="ECO:0000314"/>
    <property type="project" value="RGD"/>
</dbReference>
<dbReference type="GO" id="GO:0098879">
    <property type="term" value="F:structural constituent of postsynaptic specialization"/>
    <property type="evidence" value="ECO:0000314"/>
    <property type="project" value="SynGO"/>
</dbReference>
<dbReference type="GO" id="GO:0008270">
    <property type="term" value="F:zinc ion binding"/>
    <property type="evidence" value="ECO:0007669"/>
    <property type="project" value="UniProtKB-KW"/>
</dbReference>
<dbReference type="GO" id="GO:0007420">
    <property type="term" value="P:brain development"/>
    <property type="evidence" value="ECO:0000266"/>
    <property type="project" value="RGD"/>
</dbReference>
<dbReference type="GO" id="GO:0045454">
    <property type="term" value="P:cell redox homeostasis"/>
    <property type="evidence" value="ECO:0000250"/>
    <property type="project" value="UniProtKB"/>
</dbReference>
<dbReference type="GO" id="GO:0071364">
    <property type="term" value="P:cellular response to epidermal growth factor stimulus"/>
    <property type="evidence" value="ECO:0000314"/>
    <property type="project" value="RGD"/>
</dbReference>
<dbReference type="GO" id="GO:0071222">
    <property type="term" value="P:cellular response to lipopolysaccharide"/>
    <property type="evidence" value="ECO:0000250"/>
    <property type="project" value="UniProtKB"/>
</dbReference>
<dbReference type="GO" id="GO:0060996">
    <property type="term" value="P:dendritic spine development"/>
    <property type="evidence" value="ECO:0000316"/>
    <property type="project" value="MGI"/>
</dbReference>
<dbReference type="GO" id="GO:0048013">
    <property type="term" value="P:ephrin receptor signaling pathway"/>
    <property type="evidence" value="ECO:0000266"/>
    <property type="project" value="RGD"/>
</dbReference>
<dbReference type="GO" id="GO:0001771">
    <property type="term" value="P:immunological synapse formation"/>
    <property type="evidence" value="ECO:0000316"/>
    <property type="project" value="MGI"/>
</dbReference>
<dbReference type="GO" id="GO:0001957">
    <property type="term" value="P:intramembranous ossification"/>
    <property type="evidence" value="ECO:0000250"/>
    <property type="project" value="UniProtKB"/>
</dbReference>
<dbReference type="GO" id="GO:0007626">
    <property type="term" value="P:locomotory behavior"/>
    <property type="evidence" value="ECO:0000266"/>
    <property type="project" value="RGD"/>
</dbReference>
<dbReference type="GO" id="GO:0061743">
    <property type="term" value="P:motor learning"/>
    <property type="evidence" value="ECO:0000266"/>
    <property type="project" value="RGD"/>
</dbReference>
<dbReference type="GO" id="GO:0032013">
    <property type="term" value="P:negative regulation of ARF protein signal transduction"/>
    <property type="evidence" value="ECO:0000314"/>
    <property type="project" value="RGD"/>
</dbReference>
<dbReference type="GO" id="GO:0045820">
    <property type="term" value="P:negative regulation of glycolytic process"/>
    <property type="evidence" value="ECO:0000250"/>
    <property type="project" value="UniProtKB"/>
</dbReference>
<dbReference type="GO" id="GO:0106015">
    <property type="term" value="P:negative regulation of inflammatory response to wounding"/>
    <property type="evidence" value="ECO:0000250"/>
    <property type="project" value="UniProtKB"/>
</dbReference>
<dbReference type="GO" id="GO:0032691">
    <property type="term" value="P:negative regulation of interleukin-1 beta production"/>
    <property type="evidence" value="ECO:0000250"/>
    <property type="project" value="UniProtKB"/>
</dbReference>
<dbReference type="GO" id="GO:0048666">
    <property type="term" value="P:neuron development"/>
    <property type="evidence" value="ECO:0000266"/>
    <property type="project" value="RGD"/>
</dbReference>
<dbReference type="GO" id="GO:0099645">
    <property type="term" value="P:neurotransmitter receptor localization to postsynaptic specialization membrane"/>
    <property type="evidence" value="ECO:0000314"/>
    <property type="project" value="SynGO"/>
</dbReference>
<dbReference type="GO" id="GO:0090063">
    <property type="term" value="P:positive regulation of microtubule nucleation"/>
    <property type="evidence" value="ECO:0000250"/>
    <property type="project" value="UniProtKB"/>
</dbReference>
<dbReference type="GO" id="GO:2000646">
    <property type="term" value="P:positive regulation of receptor catabolic process"/>
    <property type="evidence" value="ECO:0000315"/>
    <property type="project" value="RGD"/>
</dbReference>
<dbReference type="GO" id="GO:0099171">
    <property type="term" value="P:presynaptic modulation of chemical synaptic transmission"/>
    <property type="evidence" value="ECO:0000266"/>
    <property type="project" value="RGD"/>
</dbReference>
<dbReference type="GO" id="GO:0032012">
    <property type="term" value="P:regulation of ARF protein signal transduction"/>
    <property type="evidence" value="ECO:0000318"/>
    <property type="project" value="GO_Central"/>
</dbReference>
<dbReference type="GO" id="GO:0032465">
    <property type="term" value="P:regulation of cytokinesis"/>
    <property type="evidence" value="ECO:0000266"/>
    <property type="project" value="RGD"/>
</dbReference>
<dbReference type="GO" id="GO:0008277">
    <property type="term" value="P:regulation of G protein-coupled receptor signaling pathway"/>
    <property type="evidence" value="ECO:0000314"/>
    <property type="project" value="RGD"/>
</dbReference>
<dbReference type="GO" id="GO:2000300">
    <property type="term" value="P:regulation of synaptic vesicle exocytosis"/>
    <property type="evidence" value="ECO:0000266"/>
    <property type="project" value="RGD"/>
</dbReference>
<dbReference type="GO" id="GO:0036465">
    <property type="term" value="P:synaptic vesicle recycling"/>
    <property type="evidence" value="ECO:0000318"/>
    <property type="project" value="GO_Central"/>
</dbReference>
<dbReference type="CDD" id="cd08846">
    <property type="entry name" value="ArfGap_GIT1"/>
    <property type="match status" value="1"/>
</dbReference>
<dbReference type="FunFam" id="1.25.40.20:FF:000013">
    <property type="entry name" value="ARF GTPase-activating protein GIT1 isoform 1"/>
    <property type="match status" value="1"/>
</dbReference>
<dbReference type="FunFam" id="1.10.220.150:FF:000003">
    <property type="entry name" value="ARF GTPase-activating protein GIT2 isoform 1"/>
    <property type="match status" value="1"/>
</dbReference>
<dbReference type="FunFam" id="1.20.120.330:FF:000002">
    <property type="entry name" value="ARF GTPase-activating protein GIT2 isoform 1"/>
    <property type="match status" value="1"/>
</dbReference>
<dbReference type="FunFam" id="1.20.5.170:FF:000015">
    <property type="entry name" value="ARF GTPase-activating protein GIT2 isoform 1"/>
    <property type="match status" value="1"/>
</dbReference>
<dbReference type="Gene3D" id="1.20.5.170">
    <property type="match status" value="1"/>
</dbReference>
<dbReference type="Gene3D" id="1.25.40.20">
    <property type="entry name" value="Ankyrin repeat-containing domain"/>
    <property type="match status" value="1"/>
</dbReference>
<dbReference type="Gene3D" id="1.10.220.150">
    <property type="entry name" value="Arf GTPase activating protein"/>
    <property type="match status" value="1"/>
</dbReference>
<dbReference type="Gene3D" id="1.20.120.330">
    <property type="entry name" value="Nucleotidyltransferases domain 2"/>
    <property type="match status" value="1"/>
</dbReference>
<dbReference type="InterPro" id="IPR002110">
    <property type="entry name" value="Ankyrin_rpt"/>
</dbReference>
<dbReference type="InterPro" id="IPR036770">
    <property type="entry name" value="Ankyrin_rpt-contain_sf"/>
</dbReference>
<dbReference type="InterPro" id="IPR037278">
    <property type="entry name" value="ARFGAP/RecO"/>
</dbReference>
<dbReference type="InterPro" id="IPR001164">
    <property type="entry name" value="ArfGAP_dom"/>
</dbReference>
<dbReference type="InterPro" id="IPR038508">
    <property type="entry name" value="ArfGAP_dom_sf"/>
</dbReference>
<dbReference type="InterPro" id="IPR047161">
    <property type="entry name" value="GIT-like"/>
</dbReference>
<dbReference type="InterPro" id="IPR032352">
    <property type="entry name" value="GIT1/2_CC"/>
</dbReference>
<dbReference type="InterPro" id="IPR022018">
    <property type="entry name" value="GIT1_C"/>
</dbReference>
<dbReference type="InterPro" id="IPR013724">
    <property type="entry name" value="GIT_SHD"/>
</dbReference>
<dbReference type="PANTHER" id="PTHR46097:SF1">
    <property type="entry name" value="ARF GTPASE-ACTIVATING PROTEIN GIT1"/>
    <property type="match status" value="1"/>
</dbReference>
<dbReference type="PANTHER" id="PTHR46097">
    <property type="entry name" value="G PROTEIN-COUPLED RECEPTOR KINASE INTERACTING ARFGAP"/>
    <property type="match status" value="1"/>
</dbReference>
<dbReference type="Pfam" id="PF12796">
    <property type="entry name" value="Ank_2"/>
    <property type="match status" value="1"/>
</dbReference>
<dbReference type="Pfam" id="PF01412">
    <property type="entry name" value="ArfGap"/>
    <property type="match status" value="1"/>
</dbReference>
<dbReference type="Pfam" id="PF12205">
    <property type="entry name" value="GIT1_C"/>
    <property type="match status" value="1"/>
</dbReference>
<dbReference type="Pfam" id="PF16559">
    <property type="entry name" value="GIT_CC"/>
    <property type="match status" value="1"/>
</dbReference>
<dbReference type="Pfam" id="PF08518">
    <property type="entry name" value="GIT_SHD"/>
    <property type="match status" value="2"/>
</dbReference>
<dbReference type="PRINTS" id="PR00405">
    <property type="entry name" value="REVINTRACTNG"/>
</dbReference>
<dbReference type="SMART" id="SM00248">
    <property type="entry name" value="ANK"/>
    <property type="match status" value="3"/>
</dbReference>
<dbReference type="SMART" id="SM00105">
    <property type="entry name" value="ArfGap"/>
    <property type="match status" value="1"/>
</dbReference>
<dbReference type="SMART" id="SM00555">
    <property type="entry name" value="GIT"/>
    <property type="match status" value="2"/>
</dbReference>
<dbReference type="SUPFAM" id="SSF48403">
    <property type="entry name" value="Ankyrin repeat"/>
    <property type="match status" value="1"/>
</dbReference>
<dbReference type="SUPFAM" id="SSF57863">
    <property type="entry name" value="ArfGap/RecO-like zinc finger"/>
    <property type="match status" value="1"/>
</dbReference>
<dbReference type="PROSITE" id="PS50297">
    <property type="entry name" value="ANK_REP_REGION"/>
    <property type="match status" value="1"/>
</dbReference>
<dbReference type="PROSITE" id="PS50088">
    <property type="entry name" value="ANK_REPEAT"/>
    <property type="match status" value="1"/>
</dbReference>
<dbReference type="PROSITE" id="PS50115">
    <property type="entry name" value="ARFGAP"/>
    <property type="match status" value="1"/>
</dbReference>
<evidence type="ECO:0000250" key="1">
    <source>
        <dbReference type="UniProtKB" id="Q68FF6"/>
    </source>
</evidence>
<evidence type="ECO:0000250" key="2">
    <source>
        <dbReference type="UniProtKB" id="Q9Y2X7"/>
    </source>
</evidence>
<evidence type="ECO:0000255" key="3"/>
<evidence type="ECO:0000255" key="4">
    <source>
        <dbReference type="PROSITE-ProRule" id="PRU00288"/>
    </source>
</evidence>
<evidence type="ECO:0000256" key="5">
    <source>
        <dbReference type="SAM" id="MobiDB-lite"/>
    </source>
</evidence>
<evidence type="ECO:0000269" key="6">
    <source>
    </source>
</evidence>
<evidence type="ECO:0000269" key="7">
    <source>
    </source>
</evidence>
<evidence type="ECO:0000269" key="8">
    <source>
    </source>
</evidence>
<evidence type="ECO:0000269" key="9">
    <source>
    </source>
</evidence>
<evidence type="ECO:0000269" key="10">
    <source>
    </source>
</evidence>
<evidence type="ECO:0000269" key="11">
    <source>
    </source>
</evidence>
<evidence type="ECO:0000269" key="12">
    <source>
    </source>
</evidence>
<evidence type="ECO:0000269" key="13">
    <source>
    </source>
</evidence>
<evidence type="ECO:0000269" key="14">
    <source>
    </source>
</evidence>
<evidence type="ECO:0000269" key="15">
    <source>
    </source>
</evidence>
<evidence type="ECO:0000269" key="16">
    <source>
    </source>
</evidence>
<evidence type="ECO:0000269" key="17">
    <source>
    </source>
</evidence>
<evidence type="ECO:0000269" key="18">
    <source>
    </source>
</evidence>
<evidence type="ECO:0000303" key="19">
    <source>
    </source>
</evidence>
<evidence type="ECO:0000305" key="20">
    <source>
    </source>
</evidence>
<evidence type="ECO:0000305" key="21">
    <source>
    </source>
</evidence>
<evidence type="ECO:0007744" key="22">
    <source>
    </source>
</evidence>
<evidence type="ECO:0007829" key="23">
    <source>
        <dbReference type="PDB" id="2JX0"/>
    </source>
</evidence>
<evidence type="ECO:0007829" key="24">
    <source>
        <dbReference type="PDB" id="2W6A"/>
    </source>
</evidence>
<evidence type="ECO:0007829" key="25">
    <source>
        <dbReference type="PDB" id="6IUH"/>
    </source>
</evidence>
<sequence>MSRKGPRAEVCADCSAPDPGWASISRGVLVCDECCSVHRSLGRHISIVKHLRHSAWPPTLLQMVHTLASNGANSIWEHSLLDPAQVQSGRRKANPQDKVHPIKSEFIRAKYQMLAFVHKLPCRDDDGVTAKDLSKQLHSSVRTGNLETCLRLLSLGAQANFFHPEKGTTPLHVAAKAGQTLQAELLVVYGADPGSPDVNGRTPIDYARQAGHHELAERLVECQYELTDRLAFYLCGRKPDHKNGHYIIPQMADRSRQKCMSQSLDLSELAKAAKKKLQALSNRLFEELAMDVYDEVDRRENDAVWLATQNHSTLVTERSAVPFLPVNPEYSATRNQGRQKLARFNAREFATLIIDILSEAKRRQQGKSLSSPTDNLELSARNQSDLDDQHDYDSVASDEDTDQEPLPSAGATRNNRARSMDSSDLSDGAVTLQEYLELKKALATSEAKVQQLMKVNSSLSDELRKLQREIHKLQAENLQLRQPPGPVPVPSLPSERAEHTLMGPGGSTHRRDRQAFSMYEPGSALKPFGGAPGDELATRLQPFHSTELEDDAIYSVHVPAGLYRIRKGVSASSVTFTPSSPLLSSSQEGSRHASKLSRHGSGAESDYENTQSGEPLLGLEGKRFLELSKEDELHAELESLDGDPDPGLPSTEDVILKTEQVTKNIQELLRAAQEFKHDSFVPCSEKIHLAVTEMASLFPKRPALEPVRSSLRLLNASAYRLQSECRKTVPPEPGAPVDFQLLTQQVIQCAYDIAKAAKQLVTITTREKKQ</sequence>
<accession>Q9Z272</accession>
<gene>
    <name evidence="19" type="primary">Git1</name>
</gene>